<dbReference type="EC" id="2.3.3.13" evidence="1"/>
<dbReference type="EMBL" id="AF197456">
    <property type="protein sequence ID" value="AAG31401.1"/>
    <property type="molecule type" value="Genomic_DNA"/>
</dbReference>
<dbReference type="SMR" id="Q9EVG4"/>
<dbReference type="UniPathway" id="UPA00048">
    <property type="reaction ID" value="UER00070"/>
</dbReference>
<dbReference type="GO" id="GO:0005829">
    <property type="term" value="C:cytosol"/>
    <property type="evidence" value="ECO:0007669"/>
    <property type="project" value="TreeGrafter"/>
</dbReference>
<dbReference type="GO" id="GO:0003852">
    <property type="term" value="F:2-isopropylmalate synthase activity"/>
    <property type="evidence" value="ECO:0007669"/>
    <property type="project" value="UniProtKB-EC"/>
</dbReference>
<dbReference type="GO" id="GO:0046872">
    <property type="term" value="F:metal ion binding"/>
    <property type="evidence" value="ECO:0007669"/>
    <property type="project" value="UniProtKB-KW"/>
</dbReference>
<dbReference type="GO" id="GO:0009098">
    <property type="term" value="P:L-leucine biosynthetic process"/>
    <property type="evidence" value="ECO:0007669"/>
    <property type="project" value="UniProtKB-UniPathway"/>
</dbReference>
<dbReference type="CDD" id="cd07940">
    <property type="entry name" value="DRE_TIM_IPMS"/>
    <property type="match status" value="1"/>
</dbReference>
<dbReference type="FunFam" id="1.10.238.260:FF:000001">
    <property type="entry name" value="2-isopropylmalate synthase"/>
    <property type="match status" value="1"/>
</dbReference>
<dbReference type="FunFam" id="3.20.20.70:FF:000010">
    <property type="entry name" value="2-isopropylmalate synthase"/>
    <property type="match status" value="1"/>
</dbReference>
<dbReference type="FunFam" id="3.30.160.270:FF:000001">
    <property type="entry name" value="2-isopropylmalate synthase"/>
    <property type="match status" value="1"/>
</dbReference>
<dbReference type="Gene3D" id="1.10.238.260">
    <property type="match status" value="1"/>
</dbReference>
<dbReference type="Gene3D" id="3.30.160.270">
    <property type="match status" value="1"/>
</dbReference>
<dbReference type="Gene3D" id="3.20.20.70">
    <property type="entry name" value="Aldolase class I"/>
    <property type="match status" value="1"/>
</dbReference>
<dbReference type="HAMAP" id="MF_01025">
    <property type="entry name" value="LeuA_type1"/>
    <property type="match status" value="1"/>
</dbReference>
<dbReference type="InterPro" id="IPR050073">
    <property type="entry name" value="2-IPM_HCS-like"/>
</dbReference>
<dbReference type="InterPro" id="IPR013709">
    <property type="entry name" value="2-isopropylmalate_synth_dimer"/>
</dbReference>
<dbReference type="InterPro" id="IPR002034">
    <property type="entry name" value="AIPM/Hcit_synth_CS"/>
</dbReference>
<dbReference type="InterPro" id="IPR013785">
    <property type="entry name" value="Aldolase_TIM"/>
</dbReference>
<dbReference type="InterPro" id="IPR054691">
    <property type="entry name" value="LeuA/HCS_post-cat"/>
</dbReference>
<dbReference type="InterPro" id="IPR036230">
    <property type="entry name" value="LeuA_allosteric_dom_sf"/>
</dbReference>
<dbReference type="InterPro" id="IPR005671">
    <property type="entry name" value="LeuA_bact_synth"/>
</dbReference>
<dbReference type="InterPro" id="IPR000891">
    <property type="entry name" value="PYR_CT"/>
</dbReference>
<dbReference type="NCBIfam" id="TIGR00973">
    <property type="entry name" value="leuA_bact"/>
    <property type="match status" value="1"/>
</dbReference>
<dbReference type="NCBIfam" id="NF002084">
    <property type="entry name" value="PRK00915.1-1"/>
    <property type="match status" value="1"/>
</dbReference>
<dbReference type="NCBIfam" id="NF002086">
    <property type="entry name" value="PRK00915.1-3"/>
    <property type="match status" value="1"/>
</dbReference>
<dbReference type="PANTHER" id="PTHR10277:SF9">
    <property type="entry name" value="2-ISOPROPYLMALATE SYNTHASE 1, CHLOROPLASTIC-RELATED"/>
    <property type="match status" value="1"/>
</dbReference>
<dbReference type="PANTHER" id="PTHR10277">
    <property type="entry name" value="HOMOCITRATE SYNTHASE-RELATED"/>
    <property type="match status" value="1"/>
</dbReference>
<dbReference type="Pfam" id="PF22617">
    <property type="entry name" value="HCS_D2"/>
    <property type="match status" value="1"/>
</dbReference>
<dbReference type="Pfam" id="PF00682">
    <property type="entry name" value="HMGL-like"/>
    <property type="match status" value="1"/>
</dbReference>
<dbReference type="Pfam" id="PF08502">
    <property type="entry name" value="LeuA_dimer"/>
    <property type="match status" value="1"/>
</dbReference>
<dbReference type="SMART" id="SM00917">
    <property type="entry name" value="LeuA_dimer"/>
    <property type="match status" value="1"/>
</dbReference>
<dbReference type="SUPFAM" id="SSF110921">
    <property type="entry name" value="2-isopropylmalate synthase LeuA, allosteric (dimerisation) domain"/>
    <property type="match status" value="1"/>
</dbReference>
<dbReference type="SUPFAM" id="SSF51569">
    <property type="entry name" value="Aldolase"/>
    <property type="match status" value="1"/>
</dbReference>
<dbReference type="PROSITE" id="PS00816">
    <property type="entry name" value="AIPM_HOMOCIT_SYNTH_2"/>
    <property type="match status" value="1"/>
</dbReference>
<dbReference type="PROSITE" id="PS50991">
    <property type="entry name" value="PYR_CT"/>
    <property type="match status" value="1"/>
</dbReference>
<protein>
    <recommendedName>
        <fullName evidence="1">2-isopropylmalate synthase</fullName>
        <ecNumber evidence="1">2.3.3.13</ecNumber>
    </recommendedName>
    <alternativeName>
        <fullName evidence="1">Alpha-IPM synthase</fullName>
    </alternativeName>
    <alternativeName>
        <fullName evidence="1">Alpha-isopropylmalate synthase</fullName>
    </alternativeName>
</protein>
<accession>Q9EVG4</accession>
<gene>
    <name evidence="1" type="primary">leuA</name>
</gene>
<keyword id="KW-0028">Amino-acid biosynthesis</keyword>
<keyword id="KW-0100">Branched-chain amino acid biosynthesis</keyword>
<keyword id="KW-0963">Cytoplasm</keyword>
<keyword id="KW-0432">Leucine biosynthesis</keyword>
<keyword id="KW-0464">Manganese</keyword>
<keyword id="KW-0479">Metal-binding</keyword>
<keyword id="KW-0614">Plasmid</keyword>
<keyword id="KW-0808">Transferase</keyword>
<name>LEU1_BUCML</name>
<comment type="function">
    <text evidence="1">Catalyzes the condensation of the acetyl group of acetyl-CoA with 3-methyl-2-oxobutanoate (2-ketoisovalerate) to form 3-carboxy-3-hydroxy-4-methylpentanoate (2-isopropylmalate).</text>
</comment>
<comment type="catalytic activity">
    <reaction evidence="1">
        <text>3-methyl-2-oxobutanoate + acetyl-CoA + H2O = (2S)-2-isopropylmalate + CoA + H(+)</text>
        <dbReference type="Rhea" id="RHEA:21524"/>
        <dbReference type="ChEBI" id="CHEBI:1178"/>
        <dbReference type="ChEBI" id="CHEBI:11851"/>
        <dbReference type="ChEBI" id="CHEBI:15377"/>
        <dbReference type="ChEBI" id="CHEBI:15378"/>
        <dbReference type="ChEBI" id="CHEBI:57287"/>
        <dbReference type="ChEBI" id="CHEBI:57288"/>
        <dbReference type="EC" id="2.3.3.13"/>
    </reaction>
</comment>
<comment type="cofactor">
    <cofactor evidence="1">
        <name>Mn(2+)</name>
        <dbReference type="ChEBI" id="CHEBI:29035"/>
    </cofactor>
</comment>
<comment type="pathway">
    <text evidence="1">Amino-acid biosynthesis; L-leucine biosynthesis; L-leucine from 3-methyl-2-oxobutanoate: step 1/4.</text>
</comment>
<comment type="subunit">
    <text evidence="1">Homodimer.</text>
</comment>
<comment type="subcellular location">
    <subcellularLocation>
        <location evidence="1">Cytoplasm</location>
    </subcellularLocation>
</comment>
<comment type="similarity">
    <text evidence="1">Belongs to the alpha-IPM synthase/homocitrate synthase family. LeuA type 1 subfamily.</text>
</comment>
<geneLocation type="plasmid">
    <name>pLeu</name>
    <name>pBAp1</name>
</geneLocation>
<organism>
    <name type="scientific">Buchnera aphidicola subsp. Macrosiphoniella ludovicianae</name>
    <dbReference type="NCBI Taxonomy" id="118105"/>
    <lineage>
        <taxon>Bacteria</taxon>
        <taxon>Pseudomonadati</taxon>
        <taxon>Pseudomonadota</taxon>
        <taxon>Gammaproteobacteria</taxon>
        <taxon>Enterobacterales</taxon>
        <taxon>Erwiniaceae</taxon>
        <taxon>Buchnera</taxon>
    </lineage>
</organism>
<reference key="1">
    <citation type="journal article" date="2001" name="J. Bacteriol.">
        <title>Vertical transmission of biosynthetic plasmids in aphid endosymbionts (Buchnera).</title>
        <authorList>
            <person name="Wernegreen J.J."/>
            <person name="Moran N.A."/>
        </authorList>
    </citation>
    <scope>NUCLEOTIDE SEQUENCE [GENOMIC DNA]</scope>
</reference>
<feature type="chain" id="PRO_0000140338" description="2-isopropylmalate synthase">
    <location>
        <begin position="1" status="less than"/>
        <end position="502"/>
    </location>
</feature>
<feature type="domain" description="Pyruvate carboxyltransferase" evidence="1">
    <location>
        <begin position="1"/>
        <end position="254"/>
    </location>
</feature>
<feature type="region of interest" description="Regulatory domain" evidence="1">
    <location>
        <begin position="379"/>
        <end position="502"/>
    </location>
</feature>
<feature type="binding site" evidence="1">
    <location>
        <position position="1"/>
    </location>
    <ligand>
        <name>Mn(2+)</name>
        <dbReference type="ChEBI" id="CHEBI:29035"/>
    </ligand>
</feature>
<feature type="binding site" evidence="1">
    <location>
        <position position="189"/>
    </location>
    <ligand>
        <name>Mn(2+)</name>
        <dbReference type="ChEBI" id="CHEBI:29035"/>
    </ligand>
</feature>
<feature type="binding site" evidence="1">
    <location>
        <position position="191"/>
    </location>
    <ligand>
        <name>Mn(2+)</name>
        <dbReference type="ChEBI" id="CHEBI:29035"/>
    </ligand>
</feature>
<feature type="binding site" evidence="1">
    <location>
        <position position="225"/>
    </location>
    <ligand>
        <name>Mn(2+)</name>
        <dbReference type="ChEBI" id="CHEBI:29035"/>
    </ligand>
</feature>
<feature type="non-terminal residue">
    <location>
        <position position="1"/>
    </location>
</feature>
<sequence length="502" mass="55911">DGEQALQASLSVKEKLQIALCLEKIGVDIMEIGFPISSPGDFKSVQIISKNIKNSRICSLARCVEKDIDAAGEAMSASNSFRIHIFLATSTLHMEYKLKKNFHEIIDMAIFAVKRALRYTDDIEFSCEDASRTTIDNLCRIVEKLIYHGVKTINIPDTVGYTVPNELSYIIKNLLERVPNIHKSIISVHCHDDLGMAVGNSISAIQAGARQIEGTINGIGERAGNTALEEVIMAIKVREDILGVSTNINYKEIYHTSKIISRICNMPIPPNKAIVGSNAFSHSSGIHQDGVLKNRKNYEIIDPSSIGFKKLKLNLTSRSGRAAVKYYMSEMGYKDTDYNIDELYADFLKLADKKGQVFDYDLESLAFISKHPEELEHFCLKFFSVQSISNGLSTASIKLLCGQKLYIESSTTSNGPVDAIYQALNKITNFPIILQKFQLIAKGKGKDALGQVNILIEYKKRKFHGIGLATDFIESSAKAMVNVLNNIWQAEQVNKKLQELKK</sequence>
<evidence type="ECO:0000255" key="1">
    <source>
        <dbReference type="HAMAP-Rule" id="MF_01025"/>
    </source>
</evidence>
<proteinExistence type="inferred from homology"/>